<sequence>MTPGLIVICGPTATGKSSLALALARRLGAPILSADSRQVYRGFDIGTAKPSVTDQEDVPHYLIDICDPTETLTVADYQEQAQALIAQFHTEGQTPILVGGTGLYIRAIVEGLKIPRVPPQLELRSQLQSQGQVQIYQWLQQVDPPAAQKIHAHDQVRTLRALEVFYTTGIPLSAQQGKNPPSYPILQIGLDISDLDQHTDIIQQRTAAMVEQGWLTEVQKLIDHYGVELPLLATLGYQEMKAYLHQQITLEEATAQTILHTRQFAKRQRTWFRANSGIHWFDATNSDLLSLVWKDIQGQPWL</sequence>
<name>MIAA_ACAM1</name>
<reference key="1">
    <citation type="journal article" date="2008" name="Proc. Natl. Acad. Sci. U.S.A.">
        <title>Niche adaptation and genome expansion in the chlorophyll d-producing cyanobacterium Acaryochloris marina.</title>
        <authorList>
            <person name="Swingley W.D."/>
            <person name="Chen M."/>
            <person name="Cheung P.C."/>
            <person name="Conrad A.L."/>
            <person name="Dejesa L.C."/>
            <person name="Hao J."/>
            <person name="Honchak B.M."/>
            <person name="Karbach L.E."/>
            <person name="Kurdoglu A."/>
            <person name="Lahiri S."/>
            <person name="Mastrian S.D."/>
            <person name="Miyashita H."/>
            <person name="Page L."/>
            <person name="Ramakrishna P."/>
            <person name="Satoh S."/>
            <person name="Sattley W.M."/>
            <person name="Shimada Y."/>
            <person name="Taylor H.L."/>
            <person name="Tomo T."/>
            <person name="Tsuchiya T."/>
            <person name="Wang Z.T."/>
            <person name="Raymond J."/>
            <person name="Mimuro M."/>
            <person name="Blankenship R.E."/>
            <person name="Touchman J.W."/>
        </authorList>
    </citation>
    <scope>NUCLEOTIDE SEQUENCE [LARGE SCALE GENOMIC DNA]</scope>
    <source>
        <strain>MBIC 11017</strain>
    </source>
</reference>
<organism>
    <name type="scientific">Acaryochloris marina (strain MBIC 11017)</name>
    <dbReference type="NCBI Taxonomy" id="329726"/>
    <lineage>
        <taxon>Bacteria</taxon>
        <taxon>Bacillati</taxon>
        <taxon>Cyanobacteriota</taxon>
        <taxon>Cyanophyceae</taxon>
        <taxon>Acaryochloridales</taxon>
        <taxon>Acaryochloridaceae</taxon>
        <taxon>Acaryochloris</taxon>
    </lineage>
</organism>
<evidence type="ECO:0000255" key="1">
    <source>
        <dbReference type="HAMAP-Rule" id="MF_00185"/>
    </source>
</evidence>
<dbReference type="EC" id="2.5.1.75" evidence="1"/>
<dbReference type="EMBL" id="CP000828">
    <property type="protein sequence ID" value="ABW29475.1"/>
    <property type="molecule type" value="Genomic_DNA"/>
</dbReference>
<dbReference type="RefSeq" id="WP_012164789.1">
    <property type="nucleotide sequence ID" value="NC_009925.1"/>
</dbReference>
<dbReference type="SMR" id="B0CG28"/>
<dbReference type="STRING" id="329726.AM1_4498"/>
<dbReference type="KEGG" id="amr:AM1_4498"/>
<dbReference type="eggNOG" id="COG0324">
    <property type="taxonomic scope" value="Bacteria"/>
</dbReference>
<dbReference type="HOGENOM" id="CLU_032616_0_1_3"/>
<dbReference type="OrthoDB" id="9776390at2"/>
<dbReference type="Proteomes" id="UP000000268">
    <property type="component" value="Chromosome"/>
</dbReference>
<dbReference type="GO" id="GO:0005524">
    <property type="term" value="F:ATP binding"/>
    <property type="evidence" value="ECO:0007669"/>
    <property type="project" value="UniProtKB-UniRule"/>
</dbReference>
<dbReference type="GO" id="GO:0052381">
    <property type="term" value="F:tRNA dimethylallyltransferase activity"/>
    <property type="evidence" value="ECO:0007669"/>
    <property type="project" value="UniProtKB-UniRule"/>
</dbReference>
<dbReference type="GO" id="GO:0006400">
    <property type="term" value="P:tRNA modification"/>
    <property type="evidence" value="ECO:0007669"/>
    <property type="project" value="TreeGrafter"/>
</dbReference>
<dbReference type="Gene3D" id="1.10.20.140">
    <property type="match status" value="1"/>
</dbReference>
<dbReference type="Gene3D" id="3.40.50.300">
    <property type="entry name" value="P-loop containing nucleotide triphosphate hydrolases"/>
    <property type="match status" value="1"/>
</dbReference>
<dbReference type="HAMAP" id="MF_00185">
    <property type="entry name" value="IPP_trans"/>
    <property type="match status" value="1"/>
</dbReference>
<dbReference type="InterPro" id="IPR039657">
    <property type="entry name" value="Dimethylallyltransferase"/>
</dbReference>
<dbReference type="InterPro" id="IPR018022">
    <property type="entry name" value="IPT"/>
</dbReference>
<dbReference type="InterPro" id="IPR027417">
    <property type="entry name" value="P-loop_NTPase"/>
</dbReference>
<dbReference type="NCBIfam" id="TIGR00174">
    <property type="entry name" value="miaA"/>
    <property type="match status" value="1"/>
</dbReference>
<dbReference type="PANTHER" id="PTHR11088">
    <property type="entry name" value="TRNA DIMETHYLALLYLTRANSFERASE"/>
    <property type="match status" value="1"/>
</dbReference>
<dbReference type="PANTHER" id="PTHR11088:SF60">
    <property type="entry name" value="TRNA DIMETHYLALLYLTRANSFERASE"/>
    <property type="match status" value="1"/>
</dbReference>
<dbReference type="Pfam" id="PF01715">
    <property type="entry name" value="IPPT"/>
    <property type="match status" value="1"/>
</dbReference>
<dbReference type="SUPFAM" id="SSF52540">
    <property type="entry name" value="P-loop containing nucleoside triphosphate hydrolases"/>
    <property type="match status" value="1"/>
</dbReference>
<feature type="chain" id="PRO_0000377041" description="tRNA dimethylallyltransferase">
    <location>
        <begin position="1"/>
        <end position="302"/>
    </location>
</feature>
<feature type="region of interest" description="Interaction with substrate tRNA" evidence="1">
    <location>
        <begin position="35"/>
        <end position="38"/>
    </location>
</feature>
<feature type="binding site" evidence="1">
    <location>
        <begin position="10"/>
        <end position="17"/>
    </location>
    <ligand>
        <name>ATP</name>
        <dbReference type="ChEBI" id="CHEBI:30616"/>
    </ligand>
</feature>
<feature type="binding site" evidence="1">
    <location>
        <begin position="12"/>
        <end position="17"/>
    </location>
    <ligand>
        <name>substrate</name>
    </ligand>
</feature>
<feature type="site" description="Interaction with substrate tRNA" evidence="1">
    <location>
        <position position="101"/>
    </location>
</feature>
<keyword id="KW-0067">ATP-binding</keyword>
<keyword id="KW-0460">Magnesium</keyword>
<keyword id="KW-0547">Nucleotide-binding</keyword>
<keyword id="KW-1185">Reference proteome</keyword>
<keyword id="KW-0808">Transferase</keyword>
<keyword id="KW-0819">tRNA processing</keyword>
<protein>
    <recommendedName>
        <fullName evidence="1">tRNA dimethylallyltransferase</fullName>
        <ecNumber evidence="1">2.5.1.75</ecNumber>
    </recommendedName>
    <alternativeName>
        <fullName evidence="1">Dimethylallyl diphosphate:tRNA dimethylallyltransferase</fullName>
        <shortName evidence="1">DMAPP:tRNA dimethylallyltransferase</shortName>
        <shortName evidence="1">DMATase</shortName>
    </alternativeName>
    <alternativeName>
        <fullName evidence="1">Isopentenyl-diphosphate:tRNA isopentenyltransferase</fullName>
        <shortName evidence="1">IPP transferase</shortName>
        <shortName evidence="1">IPPT</shortName>
        <shortName evidence="1">IPTase</shortName>
    </alternativeName>
</protein>
<proteinExistence type="inferred from homology"/>
<accession>B0CG28</accession>
<comment type="function">
    <text evidence="1">Catalyzes the transfer of a dimethylallyl group onto the adenine at position 37 in tRNAs that read codons beginning with uridine, leading to the formation of N6-(dimethylallyl)adenosine (i(6)A).</text>
</comment>
<comment type="catalytic activity">
    <reaction evidence="1">
        <text>adenosine(37) in tRNA + dimethylallyl diphosphate = N(6)-dimethylallyladenosine(37) in tRNA + diphosphate</text>
        <dbReference type="Rhea" id="RHEA:26482"/>
        <dbReference type="Rhea" id="RHEA-COMP:10162"/>
        <dbReference type="Rhea" id="RHEA-COMP:10375"/>
        <dbReference type="ChEBI" id="CHEBI:33019"/>
        <dbReference type="ChEBI" id="CHEBI:57623"/>
        <dbReference type="ChEBI" id="CHEBI:74411"/>
        <dbReference type="ChEBI" id="CHEBI:74415"/>
        <dbReference type="EC" id="2.5.1.75"/>
    </reaction>
</comment>
<comment type="cofactor">
    <cofactor evidence="1">
        <name>Mg(2+)</name>
        <dbReference type="ChEBI" id="CHEBI:18420"/>
    </cofactor>
</comment>
<comment type="subunit">
    <text evidence="1">Monomer.</text>
</comment>
<comment type="similarity">
    <text evidence="1">Belongs to the IPP transferase family.</text>
</comment>
<gene>
    <name evidence="1" type="primary">miaA</name>
    <name type="ordered locus">AM1_4498</name>
</gene>